<comment type="subcellular location">
    <subcellularLocation>
        <location evidence="3">Membrane</location>
        <topology evidence="3">Single-pass membrane protein</topology>
    </subcellularLocation>
</comment>
<protein>
    <recommendedName>
        <fullName>Uncharacterized protein MG055</fullName>
    </recommendedName>
</protein>
<accession>P47301</accession>
<accession>Q49349</accession>
<sequence>MEKKLPFSFKKKEKLTAYDDASIHELHKQLKLRTEAKKSKDKERTKEKEKHESLAKEKKPKLPFKKRIVNLWFGVDKEINKIVWVKGRQLIIIFLLILLVSGLMVGIFFGINQLLITLGIFKN</sequence>
<organism>
    <name type="scientific">Mycoplasma genitalium (strain ATCC 33530 / DSM 19775 / NCTC 10195 / G37)</name>
    <name type="common">Mycoplasmoides genitalium</name>
    <dbReference type="NCBI Taxonomy" id="243273"/>
    <lineage>
        <taxon>Bacteria</taxon>
        <taxon>Bacillati</taxon>
        <taxon>Mycoplasmatota</taxon>
        <taxon>Mycoplasmoidales</taxon>
        <taxon>Mycoplasmoidaceae</taxon>
        <taxon>Mycoplasmoides</taxon>
    </lineage>
</organism>
<reference key="1">
    <citation type="journal article" date="1995" name="Science">
        <title>The minimal gene complement of Mycoplasma genitalium.</title>
        <authorList>
            <person name="Fraser C.M."/>
            <person name="Gocayne J.D."/>
            <person name="White O."/>
            <person name="Adams M.D."/>
            <person name="Clayton R.A."/>
            <person name="Fleischmann R.D."/>
            <person name="Bult C.J."/>
            <person name="Kerlavage A.R."/>
            <person name="Sutton G.G."/>
            <person name="Kelley J.M."/>
            <person name="Fritchman J.L."/>
            <person name="Weidman J.F."/>
            <person name="Small K.V."/>
            <person name="Sandusky M."/>
            <person name="Fuhrmann J.L."/>
            <person name="Nguyen D.T."/>
            <person name="Utterback T.R."/>
            <person name="Saudek D.M."/>
            <person name="Phillips C.A."/>
            <person name="Merrick J.M."/>
            <person name="Tomb J.-F."/>
            <person name="Dougherty B.A."/>
            <person name="Bott K.F."/>
            <person name="Hu P.-C."/>
            <person name="Lucier T.S."/>
            <person name="Peterson S.N."/>
            <person name="Smith H.O."/>
            <person name="Hutchison C.A. III"/>
            <person name="Venter J.C."/>
        </authorList>
    </citation>
    <scope>NUCLEOTIDE SEQUENCE [LARGE SCALE GENOMIC DNA]</scope>
    <source>
        <strain>ATCC 33530 / DSM 19775 / NCTC 10195 / G37</strain>
    </source>
</reference>
<reference key="2">
    <citation type="journal article" date="1993" name="J. Bacteriol.">
        <title>A survey of the Mycoplasma genitalium genome by using random sequencing.</title>
        <authorList>
            <person name="Peterson S.N."/>
            <person name="Hu P.-C."/>
            <person name="Bott K.F."/>
            <person name="Hutchison C.A. III"/>
        </authorList>
    </citation>
    <scope>NUCLEOTIDE SEQUENCE [GENOMIC DNA] OF 1-108</scope>
    <source>
        <strain>ATCC 33530 / DSM 19775 / NCTC 10195 / G37</strain>
    </source>
</reference>
<name>Y055_MYCGE</name>
<dbReference type="EMBL" id="L43967">
    <property type="protein sequence ID" value="AAC71271.1"/>
    <property type="molecule type" value="Genomic_DNA"/>
</dbReference>
<dbReference type="EMBL" id="U02240">
    <property type="status" value="NOT_ANNOTATED_CDS"/>
    <property type="molecule type" value="Genomic_DNA"/>
</dbReference>
<dbReference type="PIR" id="A64206">
    <property type="entry name" value="A64206"/>
</dbReference>
<dbReference type="RefSeq" id="WP_010869309.1">
    <property type="nucleotide sequence ID" value="NC_000908.2"/>
</dbReference>
<dbReference type="SMR" id="P47301"/>
<dbReference type="STRING" id="243273.MG_055"/>
<dbReference type="GeneID" id="88282171"/>
<dbReference type="KEGG" id="mge:MG_055"/>
<dbReference type="eggNOG" id="ENOG5030N62">
    <property type="taxonomic scope" value="Bacteria"/>
</dbReference>
<dbReference type="HOGENOM" id="CLU_2012737_0_0_14"/>
<dbReference type="InParanoid" id="P47301"/>
<dbReference type="BioCyc" id="MGEN243273:G1GJ2-56-MONOMER"/>
<dbReference type="Proteomes" id="UP000000807">
    <property type="component" value="Chromosome"/>
</dbReference>
<dbReference type="GO" id="GO:0016020">
    <property type="term" value="C:membrane"/>
    <property type="evidence" value="ECO:0007669"/>
    <property type="project" value="UniProtKB-SubCell"/>
</dbReference>
<dbReference type="GO" id="GO:0008320">
    <property type="term" value="F:protein transmembrane transporter activity"/>
    <property type="evidence" value="ECO:0007669"/>
    <property type="project" value="InterPro"/>
</dbReference>
<dbReference type="GO" id="GO:0009306">
    <property type="term" value="P:protein secretion"/>
    <property type="evidence" value="ECO:0007669"/>
    <property type="project" value="InterPro"/>
</dbReference>
<dbReference type="InterPro" id="IPR005807">
    <property type="entry name" value="SecE_bac"/>
</dbReference>
<dbReference type="NCBIfam" id="TIGR00964">
    <property type="entry name" value="secE_bact"/>
    <property type="match status" value="1"/>
</dbReference>
<gene>
    <name type="ordered locus">MG055</name>
</gene>
<proteinExistence type="predicted"/>
<feature type="chain" id="PRO_0000210397" description="Uncharacterized protein MG055">
    <location>
        <begin position="1"/>
        <end position="123"/>
    </location>
</feature>
<feature type="transmembrane region" description="Helical" evidence="1">
    <location>
        <begin position="91"/>
        <end position="111"/>
    </location>
</feature>
<feature type="region of interest" description="Disordered" evidence="2">
    <location>
        <begin position="31"/>
        <end position="58"/>
    </location>
</feature>
<feature type="compositionally biased region" description="Basic and acidic residues" evidence="2">
    <location>
        <begin position="31"/>
        <end position="57"/>
    </location>
</feature>
<evidence type="ECO:0000255" key="1"/>
<evidence type="ECO:0000256" key="2">
    <source>
        <dbReference type="SAM" id="MobiDB-lite"/>
    </source>
</evidence>
<evidence type="ECO:0000305" key="3"/>
<keyword id="KW-0472">Membrane</keyword>
<keyword id="KW-1185">Reference proteome</keyword>
<keyword id="KW-0812">Transmembrane</keyword>
<keyword id="KW-1133">Transmembrane helix</keyword>